<protein>
    <recommendedName>
        <fullName evidence="10">Growth hormone receptor</fullName>
        <shortName>GH receptor</shortName>
    </recommendedName>
    <alternativeName>
        <fullName>Somatotropin receptor</fullName>
    </alternativeName>
    <component>
        <recommendedName>
            <fullName evidence="12">Growth hormone-binding protein</fullName>
            <shortName>GH-binding protein</shortName>
            <shortName>GHBP</shortName>
        </recommendedName>
        <alternativeName>
            <fullName>Serum-binding protein</fullName>
        </alternativeName>
    </component>
</protein>
<organism>
    <name type="scientific">Gallus gallus</name>
    <name type="common">Chicken</name>
    <dbReference type="NCBI Taxonomy" id="9031"/>
    <lineage>
        <taxon>Eukaryota</taxon>
        <taxon>Metazoa</taxon>
        <taxon>Chordata</taxon>
        <taxon>Craniata</taxon>
        <taxon>Vertebrata</taxon>
        <taxon>Euteleostomi</taxon>
        <taxon>Archelosauria</taxon>
        <taxon>Archosauria</taxon>
        <taxon>Dinosauria</taxon>
        <taxon>Saurischia</taxon>
        <taxon>Theropoda</taxon>
        <taxon>Coelurosauria</taxon>
        <taxon>Aves</taxon>
        <taxon>Neognathae</taxon>
        <taxon>Galloanserae</taxon>
        <taxon>Galliformes</taxon>
        <taxon>Phasianidae</taxon>
        <taxon>Phasianinae</taxon>
        <taxon>Gallus</taxon>
    </lineage>
</organism>
<accession>Q02092</accession>
<accession>Q6LDA0</accession>
<gene>
    <name type="primary">GHR</name>
</gene>
<name>GHR_CHICK</name>
<sequence length="608" mass="68573">MDLRHLLFTLALVCANDSLSASDDLLQWPQISKCRSPELETFSCYWTDGKVTTSGTIQLLYMKRSDEDWKECPDYITAGENSCYFNTSYTSIWIPYCVKLANKDEVFDEKCFSVDEIVLPDPPVHLNWTLLNTSQTGIHGDIQVRWDPPPTADVQKGWITLEYELQYKEVNETKWKELEPRLSTVVPLYSLKMGRDYEIRVRSRQRTSEKFGEFSEILYVSFTQAGIEFVHCAEEIEFPWFLVVVFGVCGLAVTAILILLSKQPRLKMLIFPPVPVPKIKGIDPDLLKKGKLDEVNSILASHDNYKTQLYNDDLWVEFIELDIDDSDEKNRVSDTDRLLSDDHLKSHSCLGAKDDDSGRASCYEPDIPETDFSASDTCDAISDIDQFKKVTEKEEDLLCLHRKDDVEALQSLANTDTQQPHTSTQSESRESWPPFADSTDSANPSVQTQLSNQNSLTNTDFYAQVSDITPAGSVVLSPGQKSKVGRAQCESCTEQNFTMDNAYFCEADVKKCIAVISQEEDEPRVQEQSCNEDTYFTTESLTTTGINLGASMAETPSMEMPVPDYTSIHIVHSPQGLVLNATALPVPEKEFNMSCGYVSTDQLNKIMP</sequence>
<evidence type="ECO:0000250" key="1">
    <source>
        <dbReference type="UniProtKB" id="P10912"/>
    </source>
</evidence>
<evidence type="ECO:0000250" key="2">
    <source>
        <dbReference type="UniProtKB" id="P16310"/>
    </source>
</evidence>
<evidence type="ECO:0000250" key="3">
    <source>
        <dbReference type="UniProtKB" id="P19941"/>
    </source>
</evidence>
<evidence type="ECO:0000255" key="4"/>
<evidence type="ECO:0000255" key="5">
    <source>
        <dbReference type="PROSITE-ProRule" id="PRU00316"/>
    </source>
</evidence>
<evidence type="ECO:0000256" key="6">
    <source>
        <dbReference type="SAM" id="MobiDB-lite"/>
    </source>
</evidence>
<evidence type="ECO:0000269" key="7">
    <source>
    </source>
</evidence>
<evidence type="ECO:0000269" key="8">
    <source>
    </source>
</evidence>
<evidence type="ECO:0000269" key="9">
    <source>
    </source>
</evidence>
<evidence type="ECO:0000303" key="10">
    <source>
    </source>
</evidence>
<evidence type="ECO:0000305" key="11"/>
<evidence type="ECO:0000305" key="12">
    <source>
    </source>
</evidence>
<comment type="function">
    <text evidence="1 8">Receptor for pituitary gland growth hormone (GH1) involved in regulating postnatal body growth (By similarity). On ligand binding, couples to the JAK2/STAT5 pathway (PubMed:11997231).</text>
</comment>
<comment type="function">
    <molecule>Growth hormone-binding protein</molecule>
    <text evidence="1">The soluble form (GHBP) acts as a reservoir of growth hormone in plasma and may be a modulator/inhibitor of GH signaling.</text>
</comment>
<comment type="subcellular location">
    <subcellularLocation>
        <location evidence="1">Cell membrane</location>
        <topology evidence="4">Single-pass type I membrane protein</topology>
    </subcellularLocation>
    <text evidence="3">On growth hormone binding, GHR is ubiquitinated, internalized, down-regulated and transported into a degradative or non-degradative pathway.</text>
</comment>
<comment type="subcellular location">
    <molecule>Growth hormone-binding protein</molecule>
    <subcellularLocation>
        <location evidence="1">Secreted</location>
    </subcellularLocation>
    <text evidence="1">Complexed to a substantial fraction of circulating GH.</text>
</comment>
<comment type="tissue specificity">
    <text evidence="9">Broad specificity.</text>
</comment>
<comment type="PTM">
    <text evidence="7">On GH binding, proteolytically cleaved, in vitro, to produce GHBP.</text>
</comment>
<comment type="disease">
    <text evidence="9">Defects in GHR are a cause of sex-linked dwarf chicken. A restriction fragment length polymorphism, and an aberrantly-sized transcript in liver leads to a GHR with undetectable GH-binding activity causing growth deficiency and other endocrine abnormalities.</text>
</comment>
<comment type="similarity">
    <text evidence="11">Belongs to the type I cytokine receptor family. Type 1 subfamily.</text>
</comment>
<dbReference type="EMBL" id="M74057">
    <property type="protein sequence ID" value="AAA48781.1"/>
    <property type="molecule type" value="mRNA"/>
</dbReference>
<dbReference type="EMBL" id="S68576">
    <property type="protein sequence ID" value="AAB29983.2"/>
    <property type="molecule type" value="mRNA"/>
</dbReference>
<dbReference type="PIR" id="S32823">
    <property type="entry name" value="S32823"/>
</dbReference>
<dbReference type="RefSeq" id="NP_001001293.1">
    <property type="nucleotide sequence ID" value="NM_001001293.1"/>
</dbReference>
<dbReference type="SMR" id="Q02092"/>
<dbReference type="FunCoup" id="Q02092">
    <property type="interactions" value="105"/>
</dbReference>
<dbReference type="STRING" id="9031.ENSGALP00000046304"/>
<dbReference type="GlyCosmos" id="Q02092">
    <property type="glycosylation" value="4 sites, No reported glycans"/>
</dbReference>
<dbReference type="GlyGen" id="Q02092">
    <property type="glycosylation" value="4 sites"/>
</dbReference>
<dbReference type="PaxDb" id="9031-ENSGALP00000023927"/>
<dbReference type="GeneID" id="408184"/>
<dbReference type="KEGG" id="gga:408184"/>
<dbReference type="CTD" id="2690"/>
<dbReference type="VEuPathDB" id="HostDB:geneid_408184"/>
<dbReference type="eggNOG" id="KOG3555">
    <property type="taxonomic scope" value="Eukaryota"/>
</dbReference>
<dbReference type="InParanoid" id="Q02092"/>
<dbReference type="OrthoDB" id="9890215at2759"/>
<dbReference type="PhylomeDB" id="Q02092"/>
<dbReference type="PRO" id="PR:Q02092"/>
<dbReference type="Proteomes" id="UP000000539">
    <property type="component" value="Unassembled WGS sequence"/>
</dbReference>
<dbReference type="GO" id="GO:0005829">
    <property type="term" value="C:cytosol"/>
    <property type="evidence" value="ECO:0000318"/>
    <property type="project" value="GO_Central"/>
</dbReference>
<dbReference type="GO" id="GO:0009897">
    <property type="term" value="C:external side of plasma membrane"/>
    <property type="evidence" value="ECO:0000318"/>
    <property type="project" value="GO_Central"/>
</dbReference>
<dbReference type="GO" id="GO:0005576">
    <property type="term" value="C:extracellular region"/>
    <property type="evidence" value="ECO:0007669"/>
    <property type="project" value="UniProtKB-SubCell"/>
</dbReference>
<dbReference type="GO" id="GO:0070195">
    <property type="term" value="C:growth hormone receptor complex"/>
    <property type="evidence" value="ECO:0000318"/>
    <property type="project" value="GO_Central"/>
</dbReference>
<dbReference type="GO" id="GO:0019955">
    <property type="term" value="F:cytokine binding"/>
    <property type="evidence" value="ECO:0000318"/>
    <property type="project" value="GO_Central"/>
</dbReference>
<dbReference type="GO" id="GO:0004903">
    <property type="term" value="F:growth hormone receptor activity"/>
    <property type="evidence" value="ECO:0000318"/>
    <property type="project" value="GO_Central"/>
</dbReference>
<dbReference type="GO" id="GO:0017046">
    <property type="term" value="F:peptide hormone binding"/>
    <property type="evidence" value="ECO:0000318"/>
    <property type="project" value="GO_Central"/>
</dbReference>
<dbReference type="GO" id="GO:0019221">
    <property type="term" value="P:cytokine-mediated signaling pathway"/>
    <property type="evidence" value="ECO:0000318"/>
    <property type="project" value="GO_Central"/>
</dbReference>
<dbReference type="GO" id="GO:0006897">
    <property type="term" value="P:endocytosis"/>
    <property type="evidence" value="ECO:0007669"/>
    <property type="project" value="UniProtKB-KW"/>
</dbReference>
<dbReference type="GO" id="GO:0060396">
    <property type="term" value="P:growth hormone receptor signaling pathway"/>
    <property type="evidence" value="ECO:0000318"/>
    <property type="project" value="GO_Central"/>
</dbReference>
<dbReference type="GO" id="GO:0008284">
    <property type="term" value="P:positive regulation of cell population proliferation"/>
    <property type="evidence" value="ECO:0000318"/>
    <property type="project" value="GO_Central"/>
</dbReference>
<dbReference type="GO" id="GO:0046427">
    <property type="term" value="P:positive regulation of receptor signaling pathway via JAK-STAT"/>
    <property type="evidence" value="ECO:0000318"/>
    <property type="project" value="GO_Central"/>
</dbReference>
<dbReference type="CDD" id="cd00063">
    <property type="entry name" value="FN3"/>
    <property type="match status" value="1"/>
</dbReference>
<dbReference type="FunFam" id="2.60.40.10:FF:000269">
    <property type="entry name" value="Growth hormone receptor"/>
    <property type="match status" value="1"/>
</dbReference>
<dbReference type="FunFam" id="2.60.40.10:FF:000318">
    <property type="entry name" value="Growth hormone receptor"/>
    <property type="match status" value="1"/>
</dbReference>
<dbReference type="Gene3D" id="2.60.40.10">
    <property type="entry name" value="Immunoglobulins"/>
    <property type="match status" value="2"/>
</dbReference>
<dbReference type="InterPro" id="IPR003961">
    <property type="entry name" value="FN3_dom"/>
</dbReference>
<dbReference type="InterPro" id="IPR036116">
    <property type="entry name" value="FN3_sf"/>
</dbReference>
<dbReference type="InterPro" id="IPR025871">
    <property type="entry name" value="GHBP"/>
</dbReference>
<dbReference type="InterPro" id="IPR015152">
    <property type="entry name" value="Growth/epo_recpt_lig-bind"/>
</dbReference>
<dbReference type="InterPro" id="IPR013783">
    <property type="entry name" value="Ig-like_fold"/>
</dbReference>
<dbReference type="InterPro" id="IPR003528">
    <property type="entry name" value="Long_hematopoietin_rcpt_CS"/>
</dbReference>
<dbReference type="PANTHER" id="PTHR23037">
    <property type="entry name" value="CYTOKINE RECEPTOR"/>
    <property type="match status" value="1"/>
</dbReference>
<dbReference type="PANTHER" id="PTHR23037:SF46">
    <property type="entry name" value="INTERLEUKIN 5 RECEPTOR SUBUNIT ALPHA"/>
    <property type="match status" value="1"/>
</dbReference>
<dbReference type="Pfam" id="PF09067">
    <property type="entry name" value="EpoR_lig-bind"/>
    <property type="match status" value="1"/>
</dbReference>
<dbReference type="Pfam" id="PF00041">
    <property type="entry name" value="fn3"/>
    <property type="match status" value="1"/>
</dbReference>
<dbReference type="Pfam" id="PF12772">
    <property type="entry name" value="GHBP"/>
    <property type="match status" value="1"/>
</dbReference>
<dbReference type="SMART" id="SM00060">
    <property type="entry name" value="FN3"/>
    <property type="match status" value="1"/>
</dbReference>
<dbReference type="SUPFAM" id="SSF49265">
    <property type="entry name" value="Fibronectin type III"/>
    <property type="match status" value="2"/>
</dbReference>
<dbReference type="PROSITE" id="PS50853">
    <property type="entry name" value="FN3"/>
    <property type="match status" value="1"/>
</dbReference>
<dbReference type="PROSITE" id="PS01352">
    <property type="entry name" value="HEMATOPO_REC_L_F1"/>
    <property type="match status" value="1"/>
</dbReference>
<proteinExistence type="evidence at protein level"/>
<keyword id="KW-1003">Cell membrane</keyword>
<keyword id="KW-1015">Disulfide bond</keyword>
<keyword id="KW-0242">Dwarfism</keyword>
<keyword id="KW-0254">Endocytosis</keyword>
<keyword id="KW-0325">Glycoprotein</keyword>
<keyword id="KW-0472">Membrane</keyword>
<keyword id="KW-0597">Phosphoprotein</keyword>
<keyword id="KW-0675">Receptor</keyword>
<keyword id="KW-1185">Reference proteome</keyword>
<keyword id="KW-0964">Secreted</keyword>
<keyword id="KW-0732">Signal</keyword>
<keyword id="KW-0812">Transmembrane</keyword>
<keyword id="KW-1133">Transmembrane helix</keyword>
<reference key="1">
    <citation type="journal article" date="1991" name="Endocrinology">
        <title>Molecular cloning of the chicken growth hormone receptor complementary deoxyribonucleic acid: mutation of the gene in sex-linked dwarf chickens.</title>
        <authorList>
            <person name="Burnside J."/>
            <person name="Liou S.S."/>
            <person name="Cogburn L.A."/>
        </authorList>
    </citation>
    <scope>NUCLEOTIDE SEQUENCE [MRNA]</scope>
    <source>
        <tissue>Liver</tissue>
    </source>
</reference>
<reference key="2">
    <citation type="journal article" date="1993" name="Mol. Endocrinol.">
        <title>Overexpression of a truncated growth hormone receptor in the sex-linked dwarf chicken: evidence for a splice mutation.</title>
        <authorList>
            <person name="Huang N."/>
            <person name="Cogburn L.A."/>
            <person name="Agarwal S.K."/>
            <person name="Marks H.L."/>
            <person name="Burnside J."/>
        </authorList>
    </citation>
    <scope>NUCLEOTIDE SEQUENCE [MRNA] OF 1-112</scope>
    <scope>DISEASE</scope>
    <scope>TISSUE SPECIFICITY</scope>
    <source>
        <tissue>Liver</tissue>
    </source>
</reference>
<reference key="3">
    <citation type="journal article" date="1999" name="Gen. Comp. Endocrinol.">
        <title>Generation of chicken growth hormone-binding proteins by proteolysis.</title>
        <authorList>
            <person name="Vleurick L."/>
            <person name="Kuhn E.R."/>
            <person name="Decuypere E."/>
            <person name="Burnside J."/>
            <person name="Pezet A."/>
            <person name="Edery M."/>
        </authorList>
    </citation>
    <scope>PROTEOLYTIC PROCESSING</scope>
</reference>
<reference key="4">
    <citation type="journal article" date="2002" name="Comp. Biochem. Physiol.">
        <title>Internalization of the chicken growth hormone receptor complex and its effect on biological functions.</title>
        <authorList>
            <person name="Kuhn E.R."/>
            <person name="Vleurick L."/>
            <person name="Edery M."/>
            <person name="Decuypere E."/>
            <person name="Darras V.M."/>
        </authorList>
    </citation>
    <scope>INTERNALIZATION</scope>
    <scope>FUNCTION</scope>
</reference>
<feature type="signal peptide" evidence="4">
    <location>
        <begin position="1"/>
        <end position="16"/>
    </location>
</feature>
<feature type="chain" id="PRO_0000010943" description="Growth hormone receptor">
    <location>
        <begin position="17"/>
        <end position="608"/>
    </location>
</feature>
<feature type="chain" id="PRO_0000010944" description="Growth hormone-binding protein" evidence="12">
    <location>
        <begin position="17"/>
        <end status="unknown"/>
    </location>
</feature>
<feature type="topological domain" description="Extracellular" evidence="4">
    <location>
        <begin position="17"/>
        <end position="237"/>
    </location>
</feature>
<feature type="transmembrane region" description="Helical" evidence="4">
    <location>
        <begin position="238"/>
        <end position="261"/>
    </location>
</feature>
<feature type="topological domain" description="Cytoplasmic" evidence="4">
    <location>
        <begin position="262"/>
        <end position="608"/>
    </location>
</feature>
<feature type="domain" description="Fibronectin type-III" evidence="5">
    <location>
        <begin position="122"/>
        <end position="226"/>
    </location>
</feature>
<feature type="region of interest" description="Required for JAK2 binding" evidence="2">
    <location>
        <begin position="267"/>
        <end position="352"/>
    </location>
</feature>
<feature type="region of interest" description="Disordered" evidence="6">
    <location>
        <begin position="413"/>
        <end position="451"/>
    </location>
</feature>
<feature type="short sequence motif" description="WSXWS motif" evidence="1">
    <location>
        <begin position="211"/>
        <end position="215"/>
    </location>
</feature>
<feature type="short sequence motif" description="Box 1 motif" evidence="2">
    <location>
        <begin position="270"/>
        <end position="278"/>
    </location>
</feature>
<feature type="short sequence motif" description="UbE motif" evidence="3">
    <location>
        <begin position="313"/>
        <end position="322"/>
    </location>
</feature>
<feature type="compositionally biased region" description="Polar residues" evidence="6">
    <location>
        <begin position="413"/>
        <end position="426"/>
    </location>
</feature>
<feature type="compositionally biased region" description="Polar residues" evidence="6">
    <location>
        <begin position="438"/>
        <end position="451"/>
    </location>
</feature>
<feature type="glycosylation site" description="N-linked (GlcNAc...) asparagine" evidence="4">
    <location>
        <position position="86"/>
    </location>
</feature>
<feature type="glycosylation site" description="N-linked (GlcNAc...) asparagine" evidence="4">
    <location>
        <position position="127"/>
    </location>
</feature>
<feature type="glycosylation site" description="N-linked (GlcNAc...) asparagine" evidence="4">
    <location>
        <position position="132"/>
    </location>
</feature>
<feature type="glycosylation site" description="N-linked (GlcNAc...) asparagine" evidence="4">
    <location>
        <position position="171"/>
    </location>
</feature>
<feature type="disulfide bond" evidence="1">
    <location>
        <begin position="34"/>
        <end position="44"/>
    </location>
</feature>
<feature type="disulfide bond" evidence="1">
    <location>
        <begin position="72"/>
        <end position="83"/>
    </location>
</feature>
<feature type="disulfide bond" evidence="1">
    <location>
        <begin position="97"/>
        <end position="111"/>
    </location>
</feature>
<feature type="sequence conflict" description="In Ref. 2; AAB29983." evidence="11" ref="2">
    <original>CF</original>
    <variation>KK</variation>
    <location>
        <begin position="111"/>
        <end position="112"/>
    </location>
</feature>